<organism>
    <name type="scientific">Mus musculus</name>
    <name type="common">Mouse</name>
    <dbReference type="NCBI Taxonomy" id="10090"/>
    <lineage>
        <taxon>Eukaryota</taxon>
        <taxon>Metazoa</taxon>
        <taxon>Chordata</taxon>
        <taxon>Craniata</taxon>
        <taxon>Vertebrata</taxon>
        <taxon>Euteleostomi</taxon>
        <taxon>Mammalia</taxon>
        <taxon>Eutheria</taxon>
        <taxon>Euarchontoglires</taxon>
        <taxon>Glires</taxon>
        <taxon>Rodentia</taxon>
        <taxon>Myomorpha</taxon>
        <taxon>Muroidea</taxon>
        <taxon>Muridae</taxon>
        <taxon>Murinae</taxon>
        <taxon>Mus</taxon>
        <taxon>Mus</taxon>
    </lineage>
</organism>
<evidence type="ECO:0000250" key="1">
    <source>
        <dbReference type="UniProtKB" id="Q9H6Y2"/>
    </source>
</evidence>
<evidence type="ECO:0000256" key="2">
    <source>
        <dbReference type="SAM" id="MobiDB-lite"/>
    </source>
</evidence>
<evidence type="ECO:0000269" key="3">
    <source>
    </source>
</evidence>
<evidence type="ECO:0000305" key="4"/>
<keyword id="KW-0963">Cytoplasm</keyword>
<keyword id="KW-0539">Nucleus</keyword>
<keyword id="KW-0597">Phosphoprotein</keyword>
<keyword id="KW-1185">Reference proteome</keyword>
<keyword id="KW-0677">Repeat</keyword>
<keyword id="KW-0698">rRNA processing</keyword>
<keyword id="KW-0853">WD repeat</keyword>
<name>WDR55_MOUSE</name>
<proteinExistence type="evidence at protein level"/>
<comment type="function">
    <text evidence="3">Nucleolar protein that acts as a modulator of rRNA synthesis. Plays a central role during organogenesis.</text>
</comment>
<comment type="subcellular location">
    <subcellularLocation>
        <location evidence="3">Nucleus</location>
        <location evidence="3">Nucleolus</location>
    </subcellularLocation>
    <subcellularLocation>
        <location evidence="3">Cytoplasm</location>
    </subcellularLocation>
</comment>
<comment type="disruption phenotype">
    <text evidence="3">Death before implantation of the embryo.</text>
</comment>
<comment type="similarity">
    <text evidence="4">Belongs to the WD repeat WDR55 family.</text>
</comment>
<accession>Q9CX97</accession>
<accession>A2RS10</accession>
<protein>
    <recommendedName>
        <fullName>WD repeat-containing protein 55</fullName>
    </recommendedName>
</protein>
<dbReference type="EMBL" id="AK018469">
    <property type="protein sequence ID" value="BAB31225.2"/>
    <property type="molecule type" value="mRNA"/>
</dbReference>
<dbReference type="EMBL" id="AK075958">
    <property type="protein sequence ID" value="BAC36082.1"/>
    <property type="molecule type" value="mRNA"/>
</dbReference>
<dbReference type="EMBL" id="AK146093">
    <property type="protein sequence ID" value="BAE26896.1"/>
    <property type="molecule type" value="mRNA"/>
</dbReference>
<dbReference type="EMBL" id="CH466557">
    <property type="protein sequence ID" value="EDK97176.1"/>
    <property type="molecule type" value="Genomic_DNA"/>
</dbReference>
<dbReference type="EMBL" id="BC131932">
    <property type="protein sequence ID" value="AAI31933.1"/>
    <property type="molecule type" value="mRNA"/>
</dbReference>
<dbReference type="EMBL" id="BC131934">
    <property type="protein sequence ID" value="AAI31935.1"/>
    <property type="molecule type" value="mRNA"/>
</dbReference>
<dbReference type="CCDS" id="CCDS29162.1"/>
<dbReference type="RefSeq" id="NP_080740.2">
    <property type="nucleotide sequence ID" value="NM_026464.2"/>
</dbReference>
<dbReference type="SMR" id="Q9CX97"/>
<dbReference type="BioGRID" id="212549">
    <property type="interactions" value="1"/>
</dbReference>
<dbReference type="FunCoup" id="Q9CX97">
    <property type="interactions" value="3100"/>
</dbReference>
<dbReference type="IntAct" id="Q9CX97">
    <property type="interactions" value="1"/>
</dbReference>
<dbReference type="STRING" id="10090.ENSMUSP00000039010"/>
<dbReference type="iPTMnet" id="Q9CX97"/>
<dbReference type="PhosphoSitePlus" id="Q9CX97"/>
<dbReference type="jPOST" id="Q9CX97"/>
<dbReference type="PaxDb" id="10090-ENSMUSP00000039010"/>
<dbReference type="PeptideAtlas" id="Q9CX97"/>
<dbReference type="ProteomicsDB" id="297894"/>
<dbReference type="Pumba" id="Q9CX97"/>
<dbReference type="Antibodypedia" id="45472">
    <property type="antibodies" value="33 antibodies from 14 providers"/>
</dbReference>
<dbReference type="DNASU" id="67936"/>
<dbReference type="Ensembl" id="ENSMUST00000049323.9">
    <property type="protein sequence ID" value="ENSMUSP00000039010.8"/>
    <property type="gene ID" value="ENSMUSG00000042660.9"/>
</dbReference>
<dbReference type="GeneID" id="67936"/>
<dbReference type="KEGG" id="mmu:67936"/>
<dbReference type="UCSC" id="uc008eol.1">
    <property type="organism name" value="mouse"/>
</dbReference>
<dbReference type="AGR" id="MGI:1915186"/>
<dbReference type="CTD" id="54853"/>
<dbReference type="MGI" id="MGI:1915186">
    <property type="gene designation" value="Wdr55"/>
</dbReference>
<dbReference type="VEuPathDB" id="HostDB:ENSMUSG00000042660"/>
<dbReference type="eggNOG" id="KOG2444">
    <property type="taxonomic scope" value="Eukaryota"/>
</dbReference>
<dbReference type="GeneTree" id="ENSGT00940000153727"/>
<dbReference type="HOGENOM" id="CLU_035848_0_1_1"/>
<dbReference type="InParanoid" id="Q9CX97"/>
<dbReference type="OMA" id="QAIHPTE"/>
<dbReference type="OrthoDB" id="2288928at2759"/>
<dbReference type="PhylomeDB" id="Q9CX97"/>
<dbReference type="TreeFam" id="TF315175"/>
<dbReference type="BioGRID-ORCS" id="67936">
    <property type="hits" value="25 hits in 65 CRISPR screens"/>
</dbReference>
<dbReference type="ChiTaRS" id="Wdr55">
    <property type="organism name" value="mouse"/>
</dbReference>
<dbReference type="PRO" id="PR:Q9CX97"/>
<dbReference type="Proteomes" id="UP000000589">
    <property type="component" value="Chromosome 18"/>
</dbReference>
<dbReference type="RNAct" id="Q9CX97">
    <property type="molecule type" value="protein"/>
</dbReference>
<dbReference type="Bgee" id="ENSMUSG00000042660">
    <property type="expression patterns" value="Expressed in ectoplacental cone and 162 other cell types or tissues"/>
</dbReference>
<dbReference type="ExpressionAtlas" id="Q9CX97">
    <property type="expression patterns" value="baseline and differential"/>
</dbReference>
<dbReference type="GO" id="GO:0005737">
    <property type="term" value="C:cytoplasm"/>
    <property type="evidence" value="ECO:0000315"/>
    <property type="project" value="UniProtKB"/>
</dbReference>
<dbReference type="GO" id="GO:0005730">
    <property type="term" value="C:nucleolus"/>
    <property type="evidence" value="ECO:0000315"/>
    <property type="project" value="UniProtKB"/>
</dbReference>
<dbReference type="GO" id="GO:0005654">
    <property type="term" value="C:nucleoplasm"/>
    <property type="evidence" value="ECO:0007669"/>
    <property type="project" value="Ensembl"/>
</dbReference>
<dbReference type="GO" id="GO:0006364">
    <property type="term" value="P:rRNA processing"/>
    <property type="evidence" value="ECO:0000315"/>
    <property type="project" value="UniProtKB"/>
</dbReference>
<dbReference type="FunFam" id="2.130.10.10:FF:000333">
    <property type="entry name" value="WD repeat-containing protein 55"/>
    <property type="match status" value="1"/>
</dbReference>
<dbReference type="FunFam" id="2.130.10.10:FF:000389">
    <property type="entry name" value="WD repeat-containing protein 55"/>
    <property type="match status" value="1"/>
</dbReference>
<dbReference type="Gene3D" id="2.130.10.10">
    <property type="entry name" value="YVTN repeat-like/Quinoprotein amine dehydrogenase"/>
    <property type="match status" value="2"/>
</dbReference>
<dbReference type="InterPro" id="IPR015943">
    <property type="entry name" value="WD40/YVTN_repeat-like_dom_sf"/>
</dbReference>
<dbReference type="InterPro" id="IPR019775">
    <property type="entry name" value="WD40_repeat_CS"/>
</dbReference>
<dbReference type="InterPro" id="IPR036322">
    <property type="entry name" value="WD40_repeat_dom_sf"/>
</dbReference>
<dbReference type="InterPro" id="IPR001680">
    <property type="entry name" value="WD40_rpt"/>
</dbReference>
<dbReference type="InterPro" id="IPR017422">
    <property type="entry name" value="WDR55"/>
</dbReference>
<dbReference type="InterPro" id="IPR050505">
    <property type="entry name" value="WDR55_POC1"/>
</dbReference>
<dbReference type="PANTHER" id="PTHR44019">
    <property type="entry name" value="WD REPEAT-CONTAINING PROTEIN 55"/>
    <property type="match status" value="1"/>
</dbReference>
<dbReference type="PANTHER" id="PTHR44019:SF20">
    <property type="entry name" value="WD REPEAT-CONTAINING PROTEIN 55"/>
    <property type="match status" value="1"/>
</dbReference>
<dbReference type="Pfam" id="PF24796">
    <property type="entry name" value="WDR55"/>
    <property type="match status" value="1"/>
</dbReference>
<dbReference type="PIRSF" id="PIRSF038169">
    <property type="entry name" value="WD_repeat_p55"/>
    <property type="match status" value="1"/>
</dbReference>
<dbReference type="SMART" id="SM00320">
    <property type="entry name" value="WD40"/>
    <property type="match status" value="6"/>
</dbReference>
<dbReference type="SUPFAM" id="SSF50978">
    <property type="entry name" value="WD40 repeat-like"/>
    <property type="match status" value="1"/>
</dbReference>
<dbReference type="PROSITE" id="PS00678">
    <property type="entry name" value="WD_REPEATS_1"/>
    <property type="match status" value="1"/>
</dbReference>
<dbReference type="PROSITE" id="PS50082">
    <property type="entry name" value="WD_REPEATS_2"/>
    <property type="match status" value="1"/>
</dbReference>
<dbReference type="PROSITE" id="PS50294">
    <property type="entry name" value="WD_REPEATS_REGION"/>
    <property type="match status" value="1"/>
</dbReference>
<reference key="1">
    <citation type="journal article" date="2005" name="Science">
        <title>The transcriptional landscape of the mammalian genome.</title>
        <authorList>
            <person name="Carninci P."/>
            <person name="Kasukawa T."/>
            <person name="Katayama S."/>
            <person name="Gough J."/>
            <person name="Frith M.C."/>
            <person name="Maeda N."/>
            <person name="Oyama R."/>
            <person name="Ravasi T."/>
            <person name="Lenhard B."/>
            <person name="Wells C."/>
            <person name="Kodzius R."/>
            <person name="Shimokawa K."/>
            <person name="Bajic V.B."/>
            <person name="Brenner S.E."/>
            <person name="Batalov S."/>
            <person name="Forrest A.R."/>
            <person name="Zavolan M."/>
            <person name="Davis M.J."/>
            <person name="Wilming L.G."/>
            <person name="Aidinis V."/>
            <person name="Allen J.E."/>
            <person name="Ambesi-Impiombato A."/>
            <person name="Apweiler R."/>
            <person name="Aturaliya R.N."/>
            <person name="Bailey T.L."/>
            <person name="Bansal M."/>
            <person name="Baxter L."/>
            <person name="Beisel K.W."/>
            <person name="Bersano T."/>
            <person name="Bono H."/>
            <person name="Chalk A.M."/>
            <person name="Chiu K.P."/>
            <person name="Choudhary V."/>
            <person name="Christoffels A."/>
            <person name="Clutterbuck D.R."/>
            <person name="Crowe M.L."/>
            <person name="Dalla E."/>
            <person name="Dalrymple B.P."/>
            <person name="de Bono B."/>
            <person name="Della Gatta G."/>
            <person name="di Bernardo D."/>
            <person name="Down T."/>
            <person name="Engstrom P."/>
            <person name="Fagiolini M."/>
            <person name="Faulkner G."/>
            <person name="Fletcher C.F."/>
            <person name="Fukushima T."/>
            <person name="Furuno M."/>
            <person name="Futaki S."/>
            <person name="Gariboldi M."/>
            <person name="Georgii-Hemming P."/>
            <person name="Gingeras T.R."/>
            <person name="Gojobori T."/>
            <person name="Green R.E."/>
            <person name="Gustincich S."/>
            <person name="Harbers M."/>
            <person name="Hayashi Y."/>
            <person name="Hensch T.K."/>
            <person name="Hirokawa N."/>
            <person name="Hill D."/>
            <person name="Huminiecki L."/>
            <person name="Iacono M."/>
            <person name="Ikeo K."/>
            <person name="Iwama A."/>
            <person name="Ishikawa T."/>
            <person name="Jakt M."/>
            <person name="Kanapin A."/>
            <person name="Katoh M."/>
            <person name="Kawasawa Y."/>
            <person name="Kelso J."/>
            <person name="Kitamura H."/>
            <person name="Kitano H."/>
            <person name="Kollias G."/>
            <person name="Krishnan S.P."/>
            <person name="Kruger A."/>
            <person name="Kummerfeld S.K."/>
            <person name="Kurochkin I.V."/>
            <person name="Lareau L.F."/>
            <person name="Lazarevic D."/>
            <person name="Lipovich L."/>
            <person name="Liu J."/>
            <person name="Liuni S."/>
            <person name="McWilliam S."/>
            <person name="Madan Babu M."/>
            <person name="Madera M."/>
            <person name="Marchionni L."/>
            <person name="Matsuda H."/>
            <person name="Matsuzawa S."/>
            <person name="Miki H."/>
            <person name="Mignone F."/>
            <person name="Miyake S."/>
            <person name="Morris K."/>
            <person name="Mottagui-Tabar S."/>
            <person name="Mulder N."/>
            <person name="Nakano N."/>
            <person name="Nakauchi H."/>
            <person name="Ng P."/>
            <person name="Nilsson R."/>
            <person name="Nishiguchi S."/>
            <person name="Nishikawa S."/>
            <person name="Nori F."/>
            <person name="Ohara O."/>
            <person name="Okazaki Y."/>
            <person name="Orlando V."/>
            <person name="Pang K.C."/>
            <person name="Pavan W.J."/>
            <person name="Pavesi G."/>
            <person name="Pesole G."/>
            <person name="Petrovsky N."/>
            <person name="Piazza S."/>
            <person name="Reed J."/>
            <person name="Reid J.F."/>
            <person name="Ring B.Z."/>
            <person name="Ringwald M."/>
            <person name="Rost B."/>
            <person name="Ruan Y."/>
            <person name="Salzberg S.L."/>
            <person name="Sandelin A."/>
            <person name="Schneider C."/>
            <person name="Schoenbach C."/>
            <person name="Sekiguchi K."/>
            <person name="Semple C.A."/>
            <person name="Seno S."/>
            <person name="Sessa L."/>
            <person name="Sheng Y."/>
            <person name="Shibata Y."/>
            <person name="Shimada H."/>
            <person name="Shimada K."/>
            <person name="Silva D."/>
            <person name="Sinclair B."/>
            <person name="Sperling S."/>
            <person name="Stupka E."/>
            <person name="Sugiura K."/>
            <person name="Sultana R."/>
            <person name="Takenaka Y."/>
            <person name="Taki K."/>
            <person name="Tammoja K."/>
            <person name="Tan S.L."/>
            <person name="Tang S."/>
            <person name="Taylor M.S."/>
            <person name="Tegner J."/>
            <person name="Teichmann S.A."/>
            <person name="Ueda H.R."/>
            <person name="van Nimwegen E."/>
            <person name="Verardo R."/>
            <person name="Wei C.L."/>
            <person name="Yagi K."/>
            <person name="Yamanishi H."/>
            <person name="Zabarovsky E."/>
            <person name="Zhu S."/>
            <person name="Zimmer A."/>
            <person name="Hide W."/>
            <person name="Bult C."/>
            <person name="Grimmond S.M."/>
            <person name="Teasdale R.D."/>
            <person name="Liu E.T."/>
            <person name="Brusic V."/>
            <person name="Quackenbush J."/>
            <person name="Wahlestedt C."/>
            <person name="Mattick J.S."/>
            <person name="Hume D.A."/>
            <person name="Kai C."/>
            <person name="Sasaki D."/>
            <person name="Tomaru Y."/>
            <person name="Fukuda S."/>
            <person name="Kanamori-Katayama M."/>
            <person name="Suzuki M."/>
            <person name="Aoki J."/>
            <person name="Arakawa T."/>
            <person name="Iida J."/>
            <person name="Imamura K."/>
            <person name="Itoh M."/>
            <person name="Kato T."/>
            <person name="Kawaji H."/>
            <person name="Kawagashira N."/>
            <person name="Kawashima T."/>
            <person name="Kojima M."/>
            <person name="Kondo S."/>
            <person name="Konno H."/>
            <person name="Nakano K."/>
            <person name="Ninomiya N."/>
            <person name="Nishio T."/>
            <person name="Okada M."/>
            <person name="Plessy C."/>
            <person name="Shibata K."/>
            <person name="Shiraki T."/>
            <person name="Suzuki S."/>
            <person name="Tagami M."/>
            <person name="Waki K."/>
            <person name="Watahiki A."/>
            <person name="Okamura-Oho Y."/>
            <person name="Suzuki H."/>
            <person name="Kawai J."/>
            <person name="Hayashizaki Y."/>
        </authorList>
    </citation>
    <scope>NUCLEOTIDE SEQUENCE [LARGE SCALE MRNA]</scope>
    <source>
        <strain>C57BL/6J</strain>
        <tissue>Lung</tissue>
        <tissue>Placenta</tissue>
    </source>
</reference>
<reference key="2">
    <citation type="submission" date="2005-07" db="EMBL/GenBank/DDBJ databases">
        <authorList>
            <person name="Mural R.J."/>
            <person name="Adams M.D."/>
            <person name="Myers E.W."/>
            <person name="Smith H.O."/>
            <person name="Venter J.C."/>
        </authorList>
    </citation>
    <scope>NUCLEOTIDE SEQUENCE [LARGE SCALE GENOMIC DNA]</scope>
</reference>
<reference key="3">
    <citation type="journal article" date="2004" name="Genome Res.">
        <title>The status, quality, and expansion of the NIH full-length cDNA project: the Mammalian Gene Collection (MGC).</title>
        <authorList>
            <consortium name="The MGC Project Team"/>
        </authorList>
    </citation>
    <scope>NUCLEOTIDE SEQUENCE [LARGE SCALE MRNA]</scope>
    <source>
        <tissue>Brain</tissue>
    </source>
</reference>
<reference key="4">
    <citation type="journal article" date="2008" name="PLoS Genet.">
        <title>WDR55 is a nucleolar modulator of ribosomal RNA synthesis, cell cycle progression, and teleost organ development.</title>
        <authorList>
            <person name="Iwanami N."/>
            <person name="Higuchi T."/>
            <person name="Sasano Y."/>
            <person name="Fujiwara T."/>
            <person name="Hoa V.Q."/>
            <person name="Okada M."/>
            <person name="Talukder S.R."/>
            <person name="Kunimatsu S."/>
            <person name="Li J."/>
            <person name="Saito F."/>
            <person name="Bhattacharya C."/>
            <person name="Matin A."/>
            <person name="Sasaki T."/>
            <person name="Shimizu N."/>
            <person name="Mitani H."/>
            <person name="Himmelbauer H."/>
            <person name="Momoi A."/>
            <person name="Kondoh H."/>
            <person name="Furutani-Seiki M."/>
            <person name="Takahama Y."/>
        </authorList>
    </citation>
    <scope>FUNCTION</scope>
    <scope>SUBCELLULAR LOCATION</scope>
    <scope>DISRUPTION PHENOTYPE</scope>
</reference>
<reference key="5">
    <citation type="journal article" date="2010" name="Cell">
        <title>A tissue-specific atlas of mouse protein phosphorylation and expression.</title>
        <authorList>
            <person name="Huttlin E.L."/>
            <person name="Jedrychowski M.P."/>
            <person name="Elias J.E."/>
            <person name="Goswami T."/>
            <person name="Rad R."/>
            <person name="Beausoleil S.A."/>
            <person name="Villen J."/>
            <person name="Haas W."/>
            <person name="Sowa M.E."/>
            <person name="Gygi S.P."/>
        </authorList>
    </citation>
    <scope>IDENTIFICATION BY MASS SPECTROMETRY [LARGE SCALE ANALYSIS]</scope>
    <source>
        <tissue>Spleen</tissue>
    </source>
</reference>
<gene>
    <name type="primary">Wdr55</name>
</gene>
<feature type="chain" id="PRO_0000237599" description="WD repeat-containing protein 55">
    <location>
        <begin position="1"/>
        <end position="388"/>
    </location>
</feature>
<feature type="repeat" description="WD 1">
    <location>
        <begin position="37"/>
        <end position="76"/>
    </location>
</feature>
<feature type="repeat" description="WD 2">
    <location>
        <begin position="83"/>
        <end position="122"/>
    </location>
</feature>
<feature type="repeat" description="WD 3">
    <location>
        <begin position="126"/>
        <end position="164"/>
    </location>
</feature>
<feature type="repeat" description="WD 4">
    <location>
        <begin position="167"/>
        <end position="206"/>
    </location>
</feature>
<feature type="repeat" description="WD 5">
    <location>
        <begin position="209"/>
        <end position="248"/>
    </location>
</feature>
<feature type="repeat" description="WD 6">
    <location>
        <begin position="251"/>
        <end position="290"/>
    </location>
</feature>
<feature type="repeat" description="WD 7">
    <location>
        <begin position="293"/>
        <end position="333"/>
    </location>
</feature>
<feature type="region of interest" description="Disordered" evidence="2">
    <location>
        <begin position="1"/>
        <end position="33"/>
    </location>
</feature>
<feature type="region of interest" description="Disordered" evidence="2">
    <location>
        <begin position="364"/>
        <end position="388"/>
    </location>
</feature>
<feature type="compositionally biased region" description="Acidic residues" evidence="2">
    <location>
        <begin position="1"/>
        <end position="20"/>
    </location>
</feature>
<feature type="compositionally biased region" description="Basic and acidic residues" evidence="2">
    <location>
        <begin position="370"/>
        <end position="379"/>
    </location>
</feature>
<feature type="modified residue" description="Phosphoserine" evidence="1">
    <location>
        <position position="355"/>
    </location>
</feature>
<sequence length="388" mass="42611">MDPTCEESPAEDSNNEEEDLDSTKAAPRIRDTPEDIVLEAPASGLAFHPTRDLLAAGDVDGDVFVFAYSCQEGETKELWSSGHHLKSCRAVVFSEDGQKLVTVSKDKAIHILDVEQGQLERRISKAHSAPINSVLLVDENALVTGDDTGGIRLWDQRKEGPLMDMRQHEEYIADMALDPAKKLLLTASGDGCLGVFNIKRRRFELLSEPQSGDLTSVALMKYGKKVACGSSEGTIYLFNWNGFGATSDRFALRAESIDCIVPVTENLLCTGSTDGIIRAVNILPNRVVGTVGQHAGEPVEALALSHCGHFLASSGHDQRLKFWDMTQLRTVVVDDYRRRKKKGGPLRALSSKAWSTDDFFAGLREDEEDAKAPEEVVRESDDDDDDSD</sequence>